<gene>
    <name evidence="6 9" type="primary">Lrrc8d</name>
    <name evidence="9" type="synonym">Lrrc5</name>
</gene>
<dbReference type="EMBL" id="BC085783">
    <property type="protein sequence ID" value="AAH85783.1"/>
    <property type="molecule type" value="mRNA"/>
</dbReference>
<dbReference type="RefSeq" id="NP_001008339.2">
    <property type="nucleotide sequence ID" value="NM_001008338.1"/>
</dbReference>
<dbReference type="RefSeq" id="XP_006250618.1">
    <property type="nucleotide sequence ID" value="XM_006250556.3"/>
</dbReference>
<dbReference type="RefSeq" id="XP_017454645.1">
    <property type="nucleotide sequence ID" value="XM_017599156.1"/>
</dbReference>
<dbReference type="RefSeq" id="XP_017454646.1">
    <property type="nucleotide sequence ID" value="XM_017599157.1"/>
</dbReference>
<dbReference type="RefSeq" id="XP_017454647.1">
    <property type="nucleotide sequence ID" value="XM_017599158.1"/>
</dbReference>
<dbReference type="RefSeq" id="XP_017454648.1">
    <property type="nucleotide sequence ID" value="XM_017599159.1"/>
</dbReference>
<dbReference type="RefSeq" id="XP_017454649.1">
    <property type="nucleotide sequence ID" value="XM_017599160.1"/>
</dbReference>
<dbReference type="RefSeq" id="XP_038947738.1">
    <property type="nucleotide sequence ID" value="XM_039091810.2"/>
</dbReference>
<dbReference type="SMR" id="Q5U308"/>
<dbReference type="FunCoup" id="Q5U308">
    <property type="interactions" value="652"/>
</dbReference>
<dbReference type="STRING" id="10116.ENSRNOP00000002888"/>
<dbReference type="iPTMnet" id="Q5U308"/>
<dbReference type="PhosphoSitePlus" id="Q5U308"/>
<dbReference type="PaxDb" id="10116-ENSRNOP00000002888"/>
<dbReference type="Ensembl" id="ENSRNOT00000094660.1">
    <property type="protein sequence ID" value="ENSRNOP00000096115.1"/>
    <property type="gene ID" value="ENSRNOG00000002121.5"/>
</dbReference>
<dbReference type="Ensembl" id="ENSRNOT00000105738.1">
    <property type="protein sequence ID" value="ENSRNOP00000091428.1"/>
    <property type="gene ID" value="ENSRNOG00000002121.5"/>
</dbReference>
<dbReference type="Ensembl" id="ENSRNOT00000106093.1">
    <property type="protein sequence ID" value="ENSRNOP00000081098.1"/>
    <property type="gene ID" value="ENSRNOG00000002121.5"/>
</dbReference>
<dbReference type="Ensembl" id="ENSRNOT00000109682.1">
    <property type="protein sequence ID" value="ENSRNOP00000090251.1"/>
    <property type="gene ID" value="ENSRNOG00000002121.5"/>
</dbReference>
<dbReference type="Ensembl" id="ENSRNOT00000112887.1">
    <property type="protein sequence ID" value="ENSRNOP00000087579.1"/>
    <property type="gene ID" value="ENSRNOG00000002121.5"/>
</dbReference>
<dbReference type="Ensembl" id="ENSRNOT00000117756.1">
    <property type="protein sequence ID" value="ENSRNOP00000092059.1"/>
    <property type="gene ID" value="ENSRNOG00000002121.5"/>
</dbReference>
<dbReference type="Ensembl" id="ENSRNOT00000118999.1">
    <property type="protein sequence ID" value="ENSRNOP00000096292.1"/>
    <property type="gene ID" value="ENSRNOG00000002121.5"/>
</dbReference>
<dbReference type="Ensembl" id="ENSRNOT00000119904.1">
    <property type="protein sequence ID" value="ENSRNOP00000078114.1"/>
    <property type="gene ID" value="ENSRNOG00000002121.5"/>
</dbReference>
<dbReference type="GeneID" id="305131"/>
<dbReference type="KEGG" id="rno:305131"/>
<dbReference type="AGR" id="RGD:1309601"/>
<dbReference type="CTD" id="55144"/>
<dbReference type="RGD" id="1309601">
    <property type="gene designation" value="Lrrc8d"/>
</dbReference>
<dbReference type="eggNOG" id="KOG0619">
    <property type="taxonomic scope" value="Eukaryota"/>
</dbReference>
<dbReference type="GeneTree" id="ENSGT00940000154043"/>
<dbReference type="HOGENOM" id="CLU_019019_0_0_1"/>
<dbReference type="InParanoid" id="Q5U308"/>
<dbReference type="OMA" id="FANGCKC"/>
<dbReference type="OrthoDB" id="20961at9989"/>
<dbReference type="PhylomeDB" id="Q5U308"/>
<dbReference type="TreeFam" id="TF331443"/>
<dbReference type="Reactome" id="R-RNO-5223345">
    <property type="pathway name" value="Miscellaneous transport and binding events"/>
</dbReference>
<dbReference type="PRO" id="PR:Q5U308"/>
<dbReference type="Proteomes" id="UP000002494">
    <property type="component" value="Chromosome 14"/>
</dbReference>
<dbReference type="GO" id="GO:0005737">
    <property type="term" value="C:cytoplasm"/>
    <property type="evidence" value="ECO:0000250"/>
    <property type="project" value="UniProtKB"/>
</dbReference>
<dbReference type="GO" id="GO:0005789">
    <property type="term" value="C:endoplasmic reticulum membrane"/>
    <property type="evidence" value="ECO:0007669"/>
    <property type="project" value="UniProtKB-SubCell"/>
</dbReference>
<dbReference type="GO" id="GO:0016020">
    <property type="term" value="C:membrane"/>
    <property type="evidence" value="ECO:0000250"/>
    <property type="project" value="UniProtKB"/>
</dbReference>
<dbReference type="GO" id="GO:0034702">
    <property type="term" value="C:monoatomic ion channel complex"/>
    <property type="evidence" value="ECO:0000315"/>
    <property type="project" value="UniProtKB"/>
</dbReference>
<dbReference type="GO" id="GO:0005886">
    <property type="term" value="C:plasma membrane"/>
    <property type="evidence" value="ECO:0000250"/>
    <property type="project" value="UniProtKB"/>
</dbReference>
<dbReference type="GO" id="GO:0005225">
    <property type="term" value="F:volume-sensitive anion channel activity"/>
    <property type="evidence" value="ECO:0000266"/>
    <property type="project" value="RGD"/>
</dbReference>
<dbReference type="GO" id="GO:0015810">
    <property type="term" value="P:aspartate transmembrane transport"/>
    <property type="evidence" value="ECO:0000315"/>
    <property type="project" value="UniProtKB"/>
</dbReference>
<dbReference type="GO" id="GO:0071470">
    <property type="term" value="P:cellular response to osmotic stress"/>
    <property type="evidence" value="ECO:0000315"/>
    <property type="project" value="UniProtKB"/>
</dbReference>
<dbReference type="GO" id="GO:0001678">
    <property type="term" value="P:intracellular glucose homeostasis"/>
    <property type="evidence" value="ECO:0000250"/>
    <property type="project" value="UniProtKB"/>
</dbReference>
<dbReference type="GO" id="GO:0035556">
    <property type="term" value="P:intracellular signal transduction"/>
    <property type="evidence" value="ECO:0000318"/>
    <property type="project" value="GO_Central"/>
</dbReference>
<dbReference type="GO" id="GO:0098656">
    <property type="term" value="P:monoatomic anion transmembrane transport"/>
    <property type="evidence" value="ECO:0000250"/>
    <property type="project" value="UniProtKB"/>
</dbReference>
<dbReference type="GO" id="GO:0034214">
    <property type="term" value="P:protein hexamerization"/>
    <property type="evidence" value="ECO:0000250"/>
    <property type="project" value="UniProtKB"/>
</dbReference>
<dbReference type="GO" id="GO:0015734">
    <property type="term" value="P:taurine transmembrane transport"/>
    <property type="evidence" value="ECO:0000315"/>
    <property type="project" value="UniProtKB"/>
</dbReference>
<dbReference type="FunFam" id="3.80.10.10:FF:000123">
    <property type="entry name" value="Volume-regulated anion channel subunit LRRC8D"/>
    <property type="match status" value="1"/>
</dbReference>
<dbReference type="Gene3D" id="3.80.10.10">
    <property type="entry name" value="Ribonuclease Inhibitor"/>
    <property type="match status" value="1"/>
</dbReference>
<dbReference type="InterPro" id="IPR001611">
    <property type="entry name" value="Leu-rich_rpt"/>
</dbReference>
<dbReference type="InterPro" id="IPR003591">
    <property type="entry name" value="Leu-rich_rpt_typical-subtyp"/>
</dbReference>
<dbReference type="InterPro" id="IPR032675">
    <property type="entry name" value="LRR_dom_sf"/>
</dbReference>
<dbReference type="InterPro" id="IPR050216">
    <property type="entry name" value="LRR_domain-containing"/>
</dbReference>
<dbReference type="InterPro" id="IPR021040">
    <property type="entry name" value="LRRC8_Pannexin-like"/>
</dbReference>
<dbReference type="PANTHER" id="PTHR48051">
    <property type="match status" value="1"/>
</dbReference>
<dbReference type="PANTHER" id="PTHR48051:SF54">
    <property type="entry name" value="LEUCINE-RICH REPEAT-CONTAINING PROTEIN"/>
    <property type="match status" value="1"/>
</dbReference>
<dbReference type="Pfam" id="PF13855">
    <property type="entry name" value="LRR_8"/>
    <property type="match status" value="2"/>
</dbReference>
<dbReference type="Pfam" id="PF12534">
    <property type="entry name" value="Pannexin_like"/>
    <property type="match status" value="1"/>
</dbReference>
<dbReference type="SMART" id="SM00365">
    <property type="entry name" value="LRR_SD22"/>
    <property type="match status" value="4"/>
</dbReference>
<dbReference type="SMART" id="SM00369">
    <property type="entry name" value="LRR_TYP"/>
    <property type="match status" value="7"/>
</dbReference>
<dbReference type="SUPFAM" id="SSF52058">
    <property type="entry name" value="L domain-like"/>
    <property type="match status" value="1"/>
</dbReference>
<dbReference type="PROSITE" id="PS51450">
    <property type="entry name" value="LRR"/>
    <property type="match status" value="9"/>
</dbReference>
<keyword id="KW-1003">Cell membrane</keyword>
<keyword id="KW-1015">Disulfide bond</keyword>
<keyword id="KW-0256">Endoplasmic reticulum</keyword>
<keyword id="KW-0407">Ion channel</keyword>
<keyword id="KW-0406">Ion transport</keyword>
<keyword id="KW-0433">Leucine-rich repeat</keyword>
<keyword id="KW-0472">Membrane</keyword>
<keyword id="KW-0597">Phosphoprotein</keyword>
<keyword id="KW-1185">Reference proteome</keyword>
<keyword id="KW-0677">Repeat</keyword>
<keyword id="KW-0812">Transmembrane</keyword>
<keyword id="KW-1133">Transmembrane helix</keyword>
<keyword id="KW-0813">Transport</keyword>
<reference key="1">
    <citation type="journal article" date="2004" name="Genome Res.">
        <title>The status, quality, and expansion of the NIH full-length cDNA project: the Mammalian Gene Collection (MGC).</title>
        <authorList>
            <consortium name="The MGC Project Team"/>
        </authorList>
    </citation>
    <scope>NUCLEOTIDE SEQUENCE [LARGE SCALE MRNA]</scope>
    <source>
        <tissue>Kidney</tissue>
    </source>
</reference>
<reference key="2">
    <citation type="journal article" date="2017" name="J. Physiol. (Lond.)">
        <title>Molecular composition and heterogeneity of the LRRC8-containing swelling-activated osmolyte channels in primary rat astrocytes.</title>
        <authorList>
            <person name="Schober A.L."/>
            <person name="Wilson C.S."/>
            <person name="Mongin A.A."/>
        </authorList>
    </citation>
    <scope>FUNCTION</scope>
    <scope>SUBCELLULAR LOCATION</scope>
    <scope>SUBUNIT</scope>
</reference>
<feature type="chain" id="PRO_0000084495" description="Volume-regulated anion channel subunit LRRC8D">
    <location>
        <begin position="1"/>
        <end position="858"/>
    </location>
</feature>
<feature type="topological domain" description="Cytoplasmic" evidence="1">
    <location>
        <begin position="1"/>
        <end position="22"/>
    </location>
</feature>
<feature type="transmembrane region" description="Helical; Name=1" evidence="1">
    <location>
        <begin position="23"/>
        <end position="48"/>
    </location>
</feature>
<feature type="topological domain" description="Extracellular" evidence="1">
    <location>
        <begin position="49"/>
        <end position="163"/>
    </location>
</feature>
<feature type="transmembrane region" description="Helical; Name=2" evidence="1">
    <location>
        <begin position="164"/>
        <end position="182"/>
    </location>
</feature>
<feature type="topological domain" description="Cytoplasmic" evidence="1">
    <location>
        <begin position="183"/>
        <end position="308"/>
    </location>
</feature>
<feature type="transmembrane region" description="Helical; Name=3" evidence="1">
    <location>
        <begin position="309"/>
        <end position="330"/>
    </location>
</feature>
<feature type="topological domain" description="Extracellular" evidence="1">
    <location>
        <begin position="331"/>
        <end position="360"/>
    </location>
</feature>
<feature type="transmembrane region" description="Helical; Name=4" evidence="1">
    <location>
        <begin position="361"/>
        <end position="386"/>
    </location>
</feature>
<feature type="topological domain" description="Cytoplasmic" evidence="1">
    <location>
        <begin position="387"/>
        <end position="858"/>
    </location>
</feature>
<feature type="repeat" description="LRR 1">
    <location>
        <begin position="514"/>
        <end position="534"/>
    </location>
</feature>
<feature type="repeat" description="LRR 2">
    <location>
        <begin position="538"/>
        <end position="559"/>
    </location>
</feature>
<feature type="repeat" description="LRR 3">
    <location>
        <begin position="561"/>
        <end position="582"/>
    </location>
</feature>
<feature type="repeat" description="LRR 4">
    <location>
        <begin position="589"/>
        <end position="609"/>
    </location>
</feature>
<feature type="repeat" description="LRR 5">
    <location>
        <begin position="612"/>
        <end position="632"/>
    </location>
</feature>
<feature type="repeat" description="LRR 6">
    <location>
        <begin position="636"/>
        <end position="657"/>
    </location>
</feature>
<feature type="repeat" description="LRR 7">
    <location>
        <begin position="659"/>
        <end position="680"/>
    </location>
</feature>
<feature type="repeat" description="LRR 8">
    <location>
        <begin position="684"/>
        <end position="705"/>
    </location>
</feature>
<feature type="repeat" description="LRR 9">
    <location>
        <begin position="707"/>
        <end position="728"/>
    </location>
</feature>
<feature type="repeat" description="LRR 10">
    <location>
        <begin position="730"/>
        <end position="751"/>
    </location>
</feature>
<feature type="repeat" description="LRR 11">
    <location>
        <begin position="753"/>
        <end position="774"/>
    </location>
</feature>
<feature type="repeat" description="LRR 12">
    <location>
        <begin position="776"/>
        <end position="797"/>
    </location>
</feature>
<feature type="repeat" description="LRR 13">
    <location>
        <begin position="799"/>
        <end position="820"/>
    </location>
</feature>
<feature type="region of interest" description="Disordered" evidence="4">
    <location>
        <begin position="118"/>
        <end position="137"/>
    </location>
</feature>
<feature type="region of interest" description="Disordered" evidence="4">
    <location>
        <begin position="221"/>
        <end position="251"/>
    </location>
</feature>
<feature type="compositionally biased region" description="Basic and acidic residues" evidence="4">
    <location>
        <begin position="126"/>
        <end position="137"/>
    </location>
</feature>
<feature type="compositionally biased region" description="Polar residues" evidence="4">
    <location>
        <begin position="227"/>
        <end position="251"/>
    </location>
</feature>
<feature type="modified residue" description="Phosphoserine" evidence="1">
    <location>
        <position position="241"/>
    </location>
</feature>
<feature type="modified residue" description="Phosphoserine" evidence="1">
    <location>
        <position position="242"/>
    </location>
</feature>
<feature type="modified residue" description="Phosphoserine" evidence="1">
    <location>
        <position position="246"/>
    </location>
</feature>
<feature type="disulfide bond" evidence="2">
    <location>
        <begin position="54"/>
        <end position="354"/>
    </location>
</feature>
<accession>Q5U308</accession>
<name>LRC8D_RAT</name>
<sequence>MFTLAEVASLNDIQPTYRILKPWWDVFMDYLAVVMLMVAIFAGTMQLTKDQVVCLPVLPSPANSKAHTPPGNADVTTEVPKMETATPQDQNGQTTNDIAFGTSAVTPDIPLQATYSHAESTFPSQETKKEKRDPTGRKTNLDFQQYVFINQMCYHLALPWYSKYFPYLALIHTIILMVSSNFWFKYPKTCSKVEHFVSILGKCFESPWTTKALSETACEDSEENKQRITGAQTLPKHVSTSSDEGSPSASTPMINKTGFKFSAEKPVIEVPSMTILDKKDGEQAKALFEKVRKFRAHVEDSDLIYKLYVVQTLIKTAKFIFILCYTANFVNAISFEHVCKPKVEHLTGYEVFECTHNMAYMLKKLLISYISIICVYGFICLYTLFWLFRIPLKEYSFEKVREESSFSDIPDVKNDFAFLLHMVDQYDQLYSKRFGVFLSEVSENKLREISLNHEWTFEKLRQHVSRNAQDKQELHLFMLSGVPDAVFDLTDLDVLKLELIPEAKIPAKISQMTNLQELHLCHCPAKVEQTAFSFLRDHLRCLHVKFTDVAEIPAWVYLLKNLRELYLIGNLNSENNKMIGLESLRELRHLKILHVKSNLTKVPSNITDVAPHLTKLVIHNDGTKLLVLNSLKKMMNVAELELQNCELERIPHAIFSLSNLQELDLKSNSIRTIEEIISFQHLKRLTCLKLWHNKIVAIPPSITHVKNLESLYFSNNKLESLPVAVFSLQKLRCLDVSYNNISTIPIEIGLLQNLQHLHITGNKVDVLPKQLFKCVKLRTLNLGQNCIASLPEKISQLSQLTQLELKGNCLDRLPAQLGQCRMLKKSGLVVEDQLFDTLPLEVKEALNQDVNVPFANGI</sequence>
<evidence type="ECO:0000250" key="1">
    <source>
        <dbReference type="UniProtKB" id="Q7L1W4"/>
    </source>
</evidence>
<evidence type="ECO:0000250" key="2">
    <source>
        <dbReference type="UniProtKB" id="Q80WG5"/>
    </source>
</evidence>
<evidence type="ECO:0000250" key="3">
    <source>
        <dbReference type="UniProtKB" id="Q8BGR2"/>
    </source>
</evidence>
<evidence type="ECO:0000256" key="4">
    <source>
        <dbReference type="SAM" id="MobiDB-lite"/>
    </source>
</evidence>
<evidence type="ECO:0000269" key="5">
    <source>
    </source>
</evidence>
<evidence type="ECO:0000303" key="6">
    <source>
    </source>
</evidence>
<evidence type="ECO:0000305" key="7"/>
<evidence type="ECO:0000305" key="8">
    <source>
    </source>
</evidence>
<evidence type="ECO:0000312" key="9">
    <source>
        <dbReference type="RGD" id="1309601"/>
    </source>
</evidence>
<organism>
    <name type="scientific">Rattus norvegicus</name>
    <name type="common">Rat</name>
    <dbReference type="NCBI Taxonomy" id="10116"/>
    <lineage>
        <taxon>Eukaryota</taxon>
        <taxon>Metazoa</taxon>
        <taxon>Chordata</taxon>
        <taxon>Craniata</taxon>
        <taxon>Vertebrata</taxon>
        <taxon>Euteleostomi</taxon>
        <taxon>Mammalia</taxon>
        <taxon>Eutheria</taxon>
        <taxon>Euarchontoglires</taxon>
        <taxon>Glires</taxon>
        <taxon>Rodentia</taxon>
        <taxon>Myomorpha</taxon>
        <taxon>Muroidea</taxon>
        <taxon>Muridae</taxon>
        <taxon>Murinae</taxon>
        <taxon>Rattus</taxon>
    </lineage>
</organism>
<proteinExistence type="evidence at protein level"/>
<protein>
    <recommendedName>
        <fullName evidence="3">Volume-regulated anion channel subunit LRRC8D</fullName>
    </recommendedName>
    <alternativeName>
        <fullName evidence="9">Leucine-rich repeat-containing protein 5</fullName>
    </alternativeName>
    <alternativeName>
        <fullName evidence="6">Leucine-rich repeat-containing protein 8D</fullName>
    </alternativeName>
</protein>
<comment type="function">
    <text evidence="1 3 5">Non-essential component of the volume-regulated anion channel (VRAC, also named VSOAC channel), an anion channel required to maintain a constant cell volume in response to extracellular or intracellular osmotic changes (PubMed:28833202). The VRAC channel conducts iodide better than chloride and can also conduct organic osmolytes like taurine (By similarity). Plays a redundant role in the efflux of amino acids, such as aspartate, in response to osmotic stress (By similarity). Channel activity requires LRRC8A plus at least one other family member (LRRC8B, LRRC8C, LRRC8D or LRRC8E); channel characteristics depend on the precise subunit composition (PubMed:28833202). Also acts as a regulator of glucose-sensing in pancreatic beta cells: VRAC currents, generated in response to hypotonicity- or glucose-induced beta cell swelling, depolarize cells, thereby causing electrical excitation, leading to increase glucose sensitivity and insulin secretion (By similarity). VRAC channels containing LRRC8D inhibit transport of immunoreactive cyclic dinucleotide GMP-AMP (2'-3'-cGAMP), an immune messenger produced in response to DNA virus in the cytosol (By similarity).</text>
</comment>
<comment type="catalytic activity">
    <reaction evidence="1">
        <text>chloride(in) = chloride(out)</text>
        <dbReference type="Rhea" id="RHEA:29823"/>
        <dbReference type="ChEBI" id="CHEBI:17996"/>
    </reaction>
</comment>
<comment type="catalytic activity">
    <reaction evidence="1">
        <text>iodide(out) = iodide(in)</text>
        <dbReference type="Rhea" id="RHEA:66324"/>
        <dbReference type="ChEBI" id="CHEBI:16382"/>
    </reaction>
</comment>
<comment type="catalytic activity">
    <reaction evidence="1">
        <text>taurine(out) = taurine(in)</text>
        <dbReference type="Rhea" id="RHEA:66328"/>
        <dbReference type="ChEBI" id="CHEBI:507393"/>
    </reaction>
</comment>
<comment type="subunit">
    <text evidence="3 8">Heterohexamer; oligomerizes with other LRRC8 proteins (LRRC8A, LRRC8B, LRRC8C and/or LRRC8E) to form a heterohexamer (By similarity). In vivo, the subunit composition may depend primarily on expression levels, and heterooligomeric channels containing various proportions of the different LRRC8 proteins may coexist (By similarity).</text>
</comment>
<comment type="subcellular location">
    <subcellularLocation>
        <location evidence="5">Cell membrane</location>
        <topology evidence="1">Multi-pass membrane protein</topology>
    </subcellularLocation>
    <subcellularLocation>
        <location evidence="1">Endoplasmic reticulum membrane</location>
        <topology evidence="1">Multi-pass membrane protein</topology>
    </subcellularLocation>
    <text evidence="1">In the absence of LRRC8A, resides primarily in a cytoplasmic compartment, probably the endoplasmic reticulum. Requires LRRC8A for expression at the cell membrane.</text>
</comment>
<comment type="domain">
    <text evidence="1">The volume-regulated anion channel (VRAC) channel forms a trimer of dimers, with symmetry mismatch between the pore-forming domain and the cytosolic LRR repeats, a topology similar to gap junction proteins.</text>
</comment>
<comment type="similarity">
    <text evidence="7">Belongs to the LRRC8 family.</text>
</comment>